<dbReference type="EMBL" id="D90223">
    <property type="protein sequence ID" value="BAA14258.1"/>
    <property type="molecule type" value="Genomic_DNA"/>
</dbReference>
<dbReference type="EMBL" id="AE004091">
    <property type="protein sequence ID" value="AAG04459.1"/>
    <property type="molecule type" value="Genomic_DNA"/>
</dbReference>
<dbReference type="PIR" id="E36125">
    <property type="entry name" value="E36125"/>
</dbReference>
<dbReference type="RefSeq" id="NP_249761.1">
    <property type="nucleotide sequence ID" value="NC_002516.2"/>
</dbReference>
<dbReference type="RefSeq" id="WP_003086389.1">
    <property type="nucleotide sequence ID" value="NZ_QZGE01000006.1"/>
</dbReference>
<dbReference type="SMR" id="P21630"/>
<dbReference type="FunCoup" id="P21630">
    <property type="interactions" value="258"/>
</dbReference>
<dbReference type="STRING" id="208964.PA1070"/>
<dbReference type="TCDB" id="3.A.1.4.8">
    <property type="family name" value="the atp-binding cassette (abc) superfamily"/>
</dbReference>
<dbReference type="PaxDb" id="208964-PA1070"/>
<dbReference type="DNASU" id="878069"/>
<dbReference type="GeneID" id="878069"/>
<dbReference type="KEGG" id="pae:PA1070"/>
<dbReference type="PATRIC" id="fig|208964.12.peg.1108"/>
<dbReference type="PseudoCAP" id="PA1070"/>
<dbReference type="HOGENOM" id="CLU_000604_1_2_6"/>
<dbReference type="InParanoid" id="P21630"/>
<dbReference type="OrthoDB" id="9776369at2"/>
<dbReference type="PhylomeDB" id="P21630"/>
<dbReference type="BioCyc" id="PAER208964:G1FZ6-1093-MONOMER"/>
<dbReference type="Proteomes" id="UP000002438">
    <property type="component" value="Chromosome"/>
</dbReference>
<dbReference type="GO" id="GO:0005886">
    <property type="term" value="C:plasma membrane"/>
    <property type="evidence" value="ECO:0007669"/>
    <property type="project" value="UniProtKB-SubCell"/>
</dbReference>
<dbReference type="GO" id="GO:0005524">
    <property type="term" value="F:ATP binding"/>
    <property type="evidence" value="ECO:0007669"/>
    <property type="project" value="UniProtKB-KW"/>
</dbReference>
<dbReference type="GO" id="GO:0016887">
    <property type="term" value="F:ATP hydrolysis activity"/>
    <property type="evidence" value="ECO:0007669"/>
    <property type="project" value="InterPro"/>
</dbReference>
<dbReference type="GO" id="GO:0015658">
    <property type="term" value="F:branched-chain amino acid transmembrane transporter activity"/>
    <property type="evidence" value="ECO:0007669"/>
    <property type="project" value="InterPro"/>
</dbReference>
<dbReference type="GO" id="GO:0042941">
    <property type="term" value="P:D-alanine transmembrane transport"/>
    <property type="evidence" value="ECO:0000315"/>
    <property type="project" value="PseudoCAP"/>
</dbReference>
<dbReference type="GO" id="GO:0015808">
    <property type="term" value="P:L-alanine transport"/>
    <property type="evidence" value="ECO:0000315"/>
    <property type="project" value="PseudoCAP"/>
</dbReference>
<dbReference type="GO" id="GO:0015807">
    <property type="term" value="P:L-amino acid transport"/>
    <property type="evidence" value="ECO:0000318"/>
    <property type="project" value="GO_Central"/>
</dbReference>
<dbReference type="CDD" id="cd03224">
    <property type="entry name" value="ABC_TM1139_LivF_branched"/>
    <property type="match status" value="1"/>
</dbReference>
<dbReference type="FunFam" id="3.40.50.300:FF:000341">
    <property type="entry name" value="High-affinity branched-chain amino acid transport ATP-binding protein"/>
    <property type="match status" value="1"/>
</dbReference>
<dbReference type="Gene3D" id="3.40.50.300">
    <property type="entry name" value="P-loop containing nucleotide triphosphate hydrolases"/>
    <property type="match status" value="1"/>
</dbReference>
<dbReference type="InterPro" id="IPR003593">
    <property type="entry name" value="AAA+_ATPase"/>
</dbReference>
<dbReference type="InterPro" id="IPR030660">
    <property type="entry name" value="ABC_branched_ATPase_LivF/BraG"/>
</dbReference>
<dbReference type="InterPro" id="IPR003439">
    <property type="entry name" value="ABC_transporter-like_ATP-bd"/>
</dbReference>
<dbReference type="InterPro" id="IPR017871">
    <property type="entry name" value="ABC_transporter-like_CS"/>
</dbReference>
<dbReference type="InterPro" id="IPR052156">
    <property type="entry name" value="BCAA_Transport_ATP-bd_LivF"/>
</dbReference>
<dbReference type="InterPro" id="IPR027417">
    <property type="entry name" value="P-loop_NTPase"/>
</dbReference>
<dbReference type="PANTHER" id="PTHR43820">
    <property type="entry name" value="HIGH-AFFINITY BRANCHED-CHAIN AMINO ACID TRANSPORT ATP-BINDING PROTEIN LIVF"/>
    <property type="match status" value="1"/>
</dbReference>
<dbReference type="PANTHER" id="PTHR43820:SF4">
    <property type="entry name" value="HIGH-AFFINITY BRANCHED-CHAIN AMINO ACID TRANSPORT ATP-BINDING PROTEIN LIVF"/>
    <property type="match status" value="1"/>
</dbReference>
<dbReference type="Pfam" id="PF00005">
    <property type="entry name" value="ABC_tran"/>
    <property type="match status" value="1"/>
</dbReference>
<dbReference type="PIRSF" id="PIRSF039137">
    <property type="entry name" value="ABC_branched_ATPase"/>
    <property type="match status" value="1"/>
</dbReference>
<dbReference type="SMART" id="SM00382">
    <property type="entry name" value="AAA"/>
    <property type="match status" value="1"/>
</dbReference>
<dbReference type="SUPFAM" id="SSF52540">
    <property type="entry name" value="P-loop containing nucleoside triphosphate hydrolases"/>
    <property type="match status" value="1"/>
</dbReference>
<dbReference type="PROSITE" id="PS00211">
    <property type="entry name" value="ABC_TRANSPORTER_1"/>
    <property type="match status" value="1"/>
</dbReference>
<dbReference type="PROSITE" id="PS50893">
    <property type="entry name" value="ABC_TRANSPORTER_2"/>
    <property type="match status" value="1"/>
</dbReference>
<gene>
    <name type="primary">braG</name>
    <name type="ordered locus">PA1070</name>
</gene>
<reference key="1">
    <citation type="journal article" date="1990" name="J. Bacteriol.">
        <title>Cloning, nucleotide sequences, and identification of products of the Pseudomonas aeruginosa PAO bra genes, which encode the high-affinity branched-chain amino acid transport system.</title>
        <authorList>
            <person name="Hoshino T."/>
            <person name="Kose K."/>
        </authorList>
    </citation>
    <scope>NUCLEOTIDE SEQUENCE [GENOMIC DNA]</scope>
    <source>
        <strain>PAO</strain>
    </source>
</reference>
<reference key="2">
    <citation type="journal article" date="2000" name="Nature">
        <title>Complete genome sequence of Pseudomonas aeruginosa PAO1, an opportunistic pathogen.</title>
        <authorList>
            <person name="Stover C.K."/>
            <person name="Pham X.-Q.T."/>
            <person name="Erwin A.L."/>
            <person name="Mizoguchi S.D."/>
            <person name="Warrener P."/>
            <person name="Hickey M.J."/>
            <person name="Brinkman F.S.L."/>
            <person name="Hufnagle W.O."/>
            <person name="Kowalik D.J."/>
            <person name="Lagrou M."/>
            <person name="Garber R.L."/>
            <person name="Goltry L."/>
            <person name="Tolentino E."/>
            <person name="Westbrock-Wadman S."/>
            <person name="Yuan Y."/>
            <person name="Brody L.L."/>
            <person name="Coulter S.N."/>
            <person name="Folger K.R."/>
            <person name="Kas A."/>
            <person name="Larbig K."/>
            <person name="Lim R.M."/>
            <person name="Smith K.A."/>
            <person name="Spencer D.H."/>
            <person name="Wong G.K.-S."/>
            <person name="Wu Z."/>
            <person name="Paulsen I.T."/>
            <person name="Reizer J."/>
            <person name="Saier M.H. Jr."/>
            <person name="Hancock R.E.W."/>
            <person name="Lory S."/>
            <person name="Olson M.V."/>
        </authorList>
    </citation>
    <scope>NUCLEOTIDE SEQUENCE [LARGE SCALE GENOMIC DNA]</scope>
    <source>
        <strain>ATCC 15692 / DSM 22644 / CIP 104116 / JCM 14847 / LMG 12228 / 1C / PRS 101 / PAO1</strain>
    </source>
</reference>
<comment type="function">
    <text>Component of the high affinity leucine, isoleucine, valine, transport system (LIV-I), which is operative without Na(+) and is specific for alanine and threonine, in addition to branched-chain amino acids.</text>
</comment>
<comment type="subcellular location">
    <subcellularLocation>
        <location evidence="2">Cell inner membrane</location>
        <topology evidence="2">Peripheral membrane protein</topology>
    </subcellularLocation>
</comment>
<comment type="similarity">
    <text evidence="2">Belongs to the ABC transporter superfamily.</text>
</comment>
<keyword id="KW-0029">Amino-acid transport</keyword>
<keyword id="KW-0067">ATP-binding</keyword>
<keyword id="KW-0997">Cell inner membrane</keyword>
<keyword id="KW-1003">Cell membrane</keyword>
<keyword id="KW-0472">Membrane</keyword>
<keyword id="KW-0547">Nucleotide-binding</keyword>
<keyword id="KW-1185">Reference proteome</keyword>
<keyword id="KW-0813">Transport</keyword>
<organism>
    <name type="scientific">Pseudomonas aeruginosa (strain ATCC 15692 / DSM 22644 / CIP 104116 / JCM 14847 / LMG 12228 / 1C / PRS 101 / PAO1)</name>
    <dbReference type="NCBI Taxonomy" id="208964"/>
    <lineage>
        <taxon>Bacteria</taxon>
        <taxon>Pseudomonadati</taxon>
        <taxon>Pseudomonadota</taxon>
        <taxon>Gammaproteobacteria</taxon>
        <taxon>Pseudomonadales</taxon>
        <taxon>Pseudomonadaceae</taxon>
        <taxon>Pseudomonas</taxon>
    </lineage>
</organism>
<accession>P21630</accession>
<proteinExistence type="inferred from homology"/>
<name>BRAG_PSEAE</name>
<sequence>MLSFDKVSTYYGKIQALHDVSVEVKKGEIVTLIGANGAGKSTLLMTLCGSPQAASGSIRYEGEELVGLPSSTIMRKSIAVVPEGRRVFSRLTVEENLAMGGFFTDKDDYQVQMDKVLELFPRLKERYEQRAGTMSGGEQQMLAIGRALMSKPKLLLLDEPSLGLAPIIIQQIFEIIEQLRREGVTVFLVEQNANQALKLADRAYVLENGRIVMHDTGAALLTNPKVRDAYLGG</sequence>
<feature type="chain" id="PRO_0000091949" description="High-affinity branched-chain amino acid transport ATP-binding protein BraG">
    <location>
        <begin position="1"/>
        <end position="233"/>
    </location>
</feature>
<feature type="domain" description="ABC transporter" evidence="1">
    <location>
        <begin position="2"/>
        <end position="233"/>
    </location>
</feature>
<feature type="binding site" evidence="1">
    <location>
        <begin position="34"/>
        <end position="41"/>
    </location>
    <ligand>
        <name>ATP</name>
        <dbReference type="ChEBI" id="CHEBI:30616"/>
    </ligand>
</feature>
<protein>
    <recommendedName>
        <fullName>High-affinity branched-chain amino acid transport ATP-binding protein BraG</fullName>
    </recommendedName>
</protein>
<evidence type="ECO:0000255" key="1">
    <source>
        <dbReference type="PROSITE-ProRule" id="PRU00434"/>
    </source>
</evidence>
<evidence type="ECO:0000305" key="2"/>